<protein>
    <recommendedName>
        <fullName evidence="1">Glycerol-3-phosphate acyltransferase</fullName>
        <shortName evidence="1">GPAT</shortName>
        <ecNumber evidence="1">2.3.1.15</ecNumber>
    </recommendedName>
</protein>
<feature type="chain" id="PRO_1000049452" description="Glycerol-3-phosphate acyltransferase">
    <location>
        <begin position="1"/>
        <end position="806"/>
    </location>
</feature>
<feature type="short sequence motif" description="HXXXXD motif">
    <location>
        <begin position="305"/>
        <end position="310"/>
    </location>
</feature>
<gene>
    <name evidence="1" type="primary">plsB</name>
    <name type="ordered locus">SPA4052</name>
</gene>
<sequence>MSGWPRIYYKLLNLPLSILVKSKSIPAEPAQELGLDTSRPIMYVLPYNSKADLLTLRAQCLAHDLPDPLEPLEIDGALLPRYVFIHGGPRVFTYYTPKEESVKLFHDYLDLHRSNPALDVQMVPVSVMFGRAPGREKGEENPPLRMLNGVQKFFAISWLGRDSFVRFSPSVSLRRMADEHGTDKIIAQKLARVARMHFARQRLAAVGPRLPARQDLFNKLLASKAIARAVEDEARSKKISHEKAQQNAIALMEEIAANFSYEMIRLTDRILGFTWNRLYQGINVHNAERVRQLAHDGHEIVYVPCHRSHMDYLLLSYVLYHQGLVPPHIAAGINLNFWPAGPIFRRLGAFFIRRTFKGNKLYSTVFREYLGELFSRGYSVEYFVEGGRSRTGRLLDPKTGTLSMTIQAMLRGGTRPITLVPIYIGYEHVMEVGTYAKELRGATKEKESLPQMLKGLSKLRNLGQGYVNFGEPMPLMTYLNQHVPEWRESIDPIEAIRPAWLTPTVNSIAADLMVRINNAGAANAMNLCCTALLASRQRSLTREQLTEQLDCYLDLMRNVPYSTDSTVPAASAGELIAHALQMNKFEVEKDTIGDIIILPREQAVLMTYYRNNIAHMLIMPSLMAAIITQHRRISRDALQQHVEALYPMLKAELFLRWEREELASVIDALASEMQRQGLITLQDDELHINPTHSRTLQLLAAGARETLQRYAITFWLLSANPSINRSTLEKESRTVAQRLSVLHGINAPEFFDKAVFSSLVLTLRDEGYISDTGDAEPAETMKIYQMLADLITSDVRLTIESATQGE</sequence>
<keyword id="KW-0012">Acyltransferase</keyword>
<keyword id="KW-0997">Cell inner membrane</keyword>
<keyword id="KW-1003">Cell membrane</keyword>
<keyword id="KW-0444">Lipid biosynthesis</keyword>
<keyword id="KW-0443">Lipid metabolism</keyword>
<keyword id="KW-0472">Membrane</keyword>
<keyword id="KW-0594">Phospholipid biosynthesis</keyword>
<keyword id="KW-1208">Phospholipid metabolism</keyword>
<keyword id="KW-0808">Transferase</keyword>
<evidence type="ECO:0000255" key="1">
    <source>
        <dbReference type="HAMAP-Rule" id="MF_00393"/>
    </source>
</evidence>
<accession>Q5PL16</accession>
<comment type="catalytic activity">
    <reaction evidence="1">
        <text>sn-glycerol 3-phosphate + an acyl-CoA = a 1-acyl-sn-glycero-3-phosphate + CoA</text>
        <dbReference type="Rhea" id="RHEA:15325"/>
        <dbReference type="ChEBI" id="CHEBI:57287"/>
        <dbReference type="ChEBI" id="CHEBI:57597"/>
        <dbReference type="ChEBI" id="CHEBI:57970"/>
        <dbReference type="ChEBI" id="CHEBI:58342"/>
        <dbReference type="EC" id="2.3.1.15"/>
    </reaction>
</comment>
<comment type="pathway">
    <text evidence="1">Phospholipid metabolism; CDP-diacylglycerol biosynthesis; CDP-diacylglycerol from sn-glycerol 3-phosphate: step 1/3.</text>
</comment>
<comment type="subcellular location">
    <subcellularLocation>
        <location evidence="1">Cell inner membrane</location>
        <topology evidence="1">Peripheral membrane protein</topology>
        <orientation evidence="1">Cytoplasmic side</orientation>
    </subcellularLocation>
</comment>
<comment type="domain">
    <text evidence="1">The HXXXXD motif is essential for acyltransferase activity and may constitute the binding site for the phosphate moiety of the glycerol-3-phosphate.</text>
</comment>
<comment type="similarity">
    <text evidence="1">Belongs to the GPAT/DAPAT family.</text>
</comment>
<reference key="1">
    <citation type="journal article" date="2004" name="Nat. Genet.">
        <title>Comparison of genome degradation in Paratyphi A and Typhi, human-restricted serovars of Salmonella enterica that cause typhoid.</title>
        <authorList>
            <person name="McClelland M."/>
            <person name="Sanderson K.E."/>
            <person name="Clifton S.W."/>
            <person name="Latreille P."/>
            <person name="Porwollik S."/>
            <person name="Sabo A."/>
            <person name="Meyer R."/>
            <person name="Bieri T."/>
            <person name="Ozersky P."/>
            <person name="McLellan M."/>
            <person name="Harkins C.R."/>
            <person name="Wang C."/>
            <person name="Nguyen C."/>
            <person name="Berghoff A."/>
            <person name="Elliott G."/>
            <person name="Kohlberg S."/>
            <person name="Strong C."/>
            <person name="Du F."/>
            <person name="Carter J."/>
            <person name="Kremizki C."/>
            <person name="Layman D."/>
            <person name="Leonard S."/>
            <person name="Sun H."/>
            <person name="Fulton L."/>
            <person name="Nash W."/>
            <person name="Miner T."/>
            <person name="Minx P."/>
            <person name="Delehaunty K."/>
            <person name="Fronick C."/>
            <person name="Magrini V."/>
            <person name="Nhan M."/>
            <person name="Warren W."/>
            <person name="Florea L."/>
            <person name="Spieth J."/>
            <person name="Wilson R.K."/>
        </authorList>
    </citation>
    <scope>NUCLEOTIDE SEQUENCE [LARGE SCALE GENOMIC DNA]</scope>
    <source>
        <strain>ATCC 9150 / SARB42</strain>
    </source>
</reference>
<name>PLSB_SALPA</name>
<proteinExistence type="inferred from homology"/>
<organism>
    <name type="scientific">Salmonella paratyphi A (strain ATCC 9150 / SARB42)</name>
    <dbReference type="NCBI Taxonomy" id="295319"/>
    <lineage>
        <taxon>Bacteria</taxon>
        <taxon>Pseudomonadati</taxon>
        <taxon>Pseudomonadota</taxon>
        <taxon>Gammaproteobacteria</taxon>
        <taxon>Enterobacterales</taxon>
        <taxon>Enterobacteriaceae</taxon>
        <taxon>Salmonella</taxon>
    </lineage>
</organism>
<dbReference type="EC" id="2.3.1.15" evidence="1"/>
<dbReference type="EMBL" id="CP000026">
    <property type="protein sequence ID" value="AAV79798.1"/>
    <property type="molecule type" value="Genomic_DNA"/>
</dbReference>
<dbReference type="RefSeq" id="WP_000017366.1">
    <property type="nucleotide sequence ID" value="NC_006511.1"/>
</dbReference>
<dbReference type="SMR" id="Q5PL16"/>
<dbReference type="KEGG" id="spt:SPA4052"/>
<dbReference type="HOGENOM" id="CLU_015407_0_0_6"/>
<dbReference type="UniPathway" id="UPA00557">
    <property type="reaction ID" value="UER00612"/>
</dbReference>
<dbReference type="Proteomes" id="UP000008185">
    <property type="component" value="Chromosome"/>
</dbReference>
<dbReference type="GO" id="GO:0005886">
    <property type="term" value="C:plasma membrane"/>
    <property type="evidence" value="ECO:0007669"/>
    <property type="project" value="UniProtKB-SubCell"/>
</dbReference>
<dbReference type="GO" id="GO:0004366">
    <property type="term" value="F:glycerol-3-phosphate O-acyltransferase activity"/>
    <property type="evidence" value="ECO:0007669"/>
    <property type="project" value="UniProtKB-UniRule"/>
</dbReference>
<dbReference type="GO" id="GO:0016024">
    <property type="term" value="P:CDP-diacylglycerol biosynthetic process"/>
    <property type="evidence" value="ECO:0007669"/>
    <property type="project" value="UniProtKB-UniRule"/>
</dbReference>
<dbReference type="GO" id="GO:0006631">
    <property type="term" value="P:fatty acid metabolic process"/>
    <property type="evidence" value="ECO:0007669"/>
    <property type="project" value="TreeGrafter"/>
</dbReference>
<dbReference type="CDD" id="cd07993">
    <property type="entry name" value="LPLAT_DHAPAT-like"/>
    <property type="match status" value="1"/>
</dbReference>
<dbReference type="HAMAP" id="MF_00393">
    <property type="entry name" value="Glyc3P_acyltrans"/>
    <property type="match status" value="1"/>
</dbReference>
<dbReference type="InterPro" id="IPR022284">
    <property type="entry name" value="GPAT/DHAPAT"/>
</dbReference>
<dbReference type="InterPro" id="IPR045520">
    <property type="entry name" value="GPAT/DHAPAT_C"/>
</dbReference>
<dbReference type="InterPro" id="IPR041728">
    <property type="entry name" value="GPAT/DHAPAT_LPLAT"/>
</dbReference>
<dbReference type="InterPro" id="IPR028354">
    <property type="entry name" value="GPAT_PlsB"/>
</dbReference>
<dbReference type="InterPro" id="IPR002123">
    <property type="entry name" value="Plipid/glycerol_acylTrfase"/>
</dbReference>
<dbReference type="NCBIfam" id="TIGR03703">
    <property type="entry name" value="plsB"/>
    <property type="match status" value="1"/>
</dbReference>
<dbReference type="NCBIfam" id="NF003441">
    <property type="entry name" value="PRK04974.1"/>
    <property type="match status" value="1"/>
</dbReference>
<dbReference type="PANTHER" id="PTHR12563:SF17">
    <property type="entry name" value="DIHYDROXYACETONE PHOSPHATE ACYLTRANSFERASE"/>
    <property type="match status" value="1"/>
</dbReference>
<dbReference type="PANTHER" id="PTHR12563">
    <property type="entry name" value="GLYCEROL-3-PHOSPHATE ACYLTRANSFERASE"/>
    <property type="match status" value="1"/>
</dbReference>
<dbReference type="Pfam" id="PF01553">
    <property type="entry name" value="Acyltransferase"/>
    <property type="match status" value="1"/>
</dbReference>
<dbReference type="Pfam" id="PF19277">
    <property type="entry name" value="GPAT_C"/>
    <property type="match status" value="1"/>
</dbReference>
<dbReference type="PIRSF" id="PIRSF500064">
    <property type="entry name" value="GPAT"/>
    <property type="match status" value="1"/>
</dbReference>
<dbReference type="PIRSF" id="PIRSF000437">
    <property type="entry name" value="GPAT_DHAPAT"/>
    <property type="match status" value="1"/>
</dbReference>
<dbReference type="SMART" id="SM00563">
    <property type="entry name" value="PlsC"/>
    <property type="match status" value="1"/>
</dbReference>
<dbReference type="SUPFAM" id="SSF69593">
    <property type="entry name" value="Glycerol-3-phosphate (1)-acyltransferase"/>
    <property type="match status" value="1"/>
</dbReference>